<comment type="function">
    <text evidence="6 7">Component of the chloroplast ribosome (chloro-ribosome), a dedicated translation machinery responsible for the synthesis of chloroplast genome-encoded proteins, including proteins of the transcription and translation machinery and components of the photosynthetic apparatus.</text>
</comment>
<comment type="subunit">
    <text evidence="1 2">Component of the chloroplast small ribosomal subunit (SSU). Mature 70S chloroplast ribosomes of higher plants consist of a small (30S) and a large (50S) subunit. The 30S small subunit contains 1 molecule of ribosomal RNA (16S rRNA) and 24 different proteins. The 50S large subunit contains 3 rRNA molecules (23S, 5S and 4.5S rRNA) and 33 different proteins.</text>
</comment>
<comment type="subcellular location">
    <subcellularLocation>
        <location evidence="1 2">Plastid</location>
        <location evidence="1 2">Chloroplast</location>
    </subcellularLocation>
</comment>
<comment type="mass spectrometry" mass="15443.8" method="Electrospray" evidence="1"/>
<comment type="mass spectrometry" mass="15560.0" method="MALDI" evidence="1"/>
<comment type="similarity">
    <text evidence="5">Belongs to the universal ribosomal protein uS8 family.</text>
</comment>
<organism>
    <name type="scientific">Spinacia oleracea</name>
    <name type="common">Spinach</name>
    <dbReference type="NCBI Taxonomy" id="3562"/>
    <lineage>
        <taxon>Eukaryota</taxon>
        <taxon>Viridiplantae</taxon>
        <taxon>Streptophyta</taxon>
        <taxon>Embryophyta</taxon>
        <taxon>Tracheophyta</taxon>
        <taxon>Spermatophyta</taxon>
        <taxon>Magnoliopsida</taxon>
        <taxon>eudicotyledons</taxon>
        <taxon>Gunneridae</taxon>
        <taxon>Pentapetalae</taxon>
        <taxon>Caryophyllales</taxon>
        <taxon>Chenopodiaceae</taxon>
        <taxon>Chenopodioideae</taxon>
        <taxon>Anserineae</taxon>
        <taxon>Spinacia</taxon>
    </lineage>
</organism>
<gene>
    <name type="primary">rps8</name>
</gene>
<evidence type="ECO:0000269" key="1">
    <source>
    </source>
</evidence>
<evidence type="ECO:0000269" key="2">
    <source>
    </source>
</evidence>
<evidence type="ECO:0000303" key="3">
    <source>
    </source>
</evidence>
<evidence type="ECO:0000303" key="4">
    <source>
    </source>
</evidence>
<evidence type="ECO:0000305" key="5"/>
<evidence type="ECO:0000305" key="6">
    <source>
    </source>
</evidence>
<evidence type="ECO:0000305" key="7">
    <source>
    </source>
</evidence>
<dbReference type="EMBL" id="AF206521">
    <property type="protein sequence ID" value="AAF19197.1"/>
    <property type="molecule type" value="Genomic_DNA"/>
</dbReference>
<dbReference type="EMBL" id="AJ400848">
    <property type="protein sequence ID" value="CAB88763.1"/>
    <property type="molecule type" value="Genomic_DNA"/>
</dbReference>
<dbReference type="EMBL" id="X13336">
    <property type="protein sequence ID" value="CAA31718.1"/>
    <property type="molecule type" value="Genomic_DNA"/>
</dbReference>
<dbReference type="PIR" id="S01981">
    <property type="entry name" value="S01981"/>
</dbReference>
<dbReference type="RefSeq" id="NP_054970.1">
    <property type="nucleotide sequence ID" value="NC_002202.1"/>
</dbReference>
<dbReference type="PDB" id="4V61">
    <property type="method" value="EM"/>
    <property type="resolution" value="9.40 A"/>
    <property type="chains" value="AH=1-134"/>
</dbReference>
<dbReference type="PDB" id="5MMJ">
    <property type="method" value="EM"/>
    <property type="resolution" value="3.65 A"/>
    <property type="chains" value="h=1-134"/>
</dbReference>
<dbReference type="PDB" id="5MMM">
    <property type="method" value="EM"/>
    <property type="resolution" value="3.40 A"/>
    <property type="chains" value="h=1-134"/>
</dbReference>
<dbReference type="PDB" id="5X8P">
    <property type="method" value="EM"/>
    <property type="resolution" value="3.40 A"/>
    <property type="chains" value="h=1-134"/>
</dbReference>
<dbReference type="PDB" id="5X8R">
    <property type="method" value="EM"/>
    <property type="resolution" value="3.70 A"/>
    <property type="chains" value="h=1-134"/>
</dbReference>
<dbReference type="PDB" id="6ERI">
    <property type="method" value="EM"/>
    <property type="resolution" value="3.00 A"/>
    <property type="chains" value="BH=1-134"/>
</dbReference>
<dbReference type="PDBsum" id="4V61"/>
<dbReference type="PDBsum" id="5MMJ"/>
<dbReference type="PDBsum" id="5MMM"/>
<dbReference type="PDBsum" id="5X8P"/>
<dbReference type="PDBsum" id="5X8R"/>
<dbReference type="PDBsum" id="6ERI"/>
<dbReference type="EMDB" id="EMD-3532"/>
<dbReference type="EMDB" id="EMD-3533"/>
<dbReference type="EMDB" id="EMD-3941"/>
<dbReference type="EMDB" id="EMD-6709"/>
<dbReference type="EMDB" id="EMD-6710"/>
<dbReference type="SMR" id="P09597"/>
<dbReference type="FunCoup" id="P09597">
    <property type="interactions" value="125"/>
</dbReference>
<dbReference type="STRING" id="3562.P09597"/>
<dbReference type="GeneID" id="2715649"/>
<dbReference type="KEGG" id="soe:2715649"/>
<dbReference type="InParanoid" id="P09597"/>
<dbReference type="OrthoDB" id="409928at2759"/>
<dbReference type="Proteomes" id="UP001155700">
    <property type="component" value="Chloroplast Pltd"/>
</dbReference>
<dbReference type="GO" id="GO:0009507">
    <property type="term" value="C:chloroplast"/>
    <property type="evidence" value="ECO:0007669"/>
    <property type="project" value="UniProtKB-SubCell"/>
</dbReference>
<dbReference type="GO" id="GO:1990904">
    <property type="term" value="C:ribonucleoprotein complex"/>
    <property type="evidence" value="ECO:0007669"/>
    <property type="project" value="UniProtKB-KW"/>
</dbReference>
<dbReference type="GO" id="GO:0005840">
    <property type="term" value="C:ribosome"/>
    <property type="evidence" value="ECO:0007669"/>
    <property type="project" value="UniProtKB-KW"/>
</dbReference>
<dbReference type="GO" id="GO:0019843">
    <property type="term" value="F:rRNA binding"/>
    <property type="evidence" value="ECO:0007669"/>
    <property type="project" value="UniProtKB-UniRule"/>
</dbReference>
<dbReference type="GO" id="GO:0003735">
    <property type="term" value="F:structural constituent of ribosome"/>
    <property type="evidence" value="ECO:0000318"/>
    <property type="project" value="GO_Central"/>
</dbReference>
<dbReference type="GO" id="GO:0006412">
    <property type="term" value="P:translation"/>
    <property type="evidence" value="ECO:0007669"/>
    <property type="project" value="UniProtKB-UniRule"/>
</dbReference>
<dbReference type="FunFam" id="3.30.1490.10:FF:000001">
    <property type="entry name" value="30S ribosomal protein S8"/>
    <property type="match status" value="1"/>
</dbReference>
<dbReference type="FunFam" id="3.30.1370.30:FF:000004">
    <property type="entry name" value="30S ribosomal protein S8, chloroplastic"/>
    <property type="match status" value="1"/>
</dbReference>
<dbReference type="Gene3D" id="3.30.1370.30">
    <property type="match status" value="1"/>
</dbReference>
<dbReference type="Gene3D" id="3.30.1490.10">
    <property type="match status" value="1"/>
</dbReference>
<dbReference type="HAMAP" id="MF_01302_B">
    <property type="entry name" value="Ribosomal_uS8_B"/>
    <property type="match status" value="1"/>
</dbReference>
<dbReference type="InterPro" id="IPR000630">
    <property type="entry name" value="Ribosomal_uS8"/>
</dbReference>
<dbReference type="InterPro" id="IPR047863">
    <property type="entry name" value="Ribosomal_uS8_CS"/>
</dbReference>
<dbReference type="InterPro" id="IPR035987">
    <property type="entry name" value="Ribosomal_uS8_sf"/>
</dbReference>
<dbReference type="NCBIfam" id="NF001109">
    <property type="entry name" value="PRK00136.1"/>
    <property type="match status" value="1"/>
</dbReference>
<dbReference type="PANTHER" id="PTHR11758">
    <property type="entry name" value="40S RIBOSOMAL PROTEIN S15A"/>
    <property type="match status" value="1"/>
</dbReference>
<dbReference type="Pfam" id="PF00410">
    <property type="entry name" value="Ribosomal_S8"/>
    <property type="match status" value="1"/>
</dbReference>
<dbReference type="SUPFAM" id="SSF56047">
    <property type="entry name" value="Ribosomal protein S8"/>
    <property type="match status" value="1"/>
</dbReference>
<dbReference type="PROSITE" id="PS00053">
    <property type="entry name" value="RIBOSOMAL_S8"/>
    <property type="match status" value="1"/>
</dbReference>
<keyword id="KW-0002">3D-structure</keyword>
<keyword id="KW-0150">Chloroplast</keyword>
<keyword id="KW-0903">Direct protein sequencing</keyword>
<keyword id="KW-0934">Plastid</keyword>
<keyword id="KW-1185">Reference proteome</keyword>
<keyword id="KW-0687">Ribonucleoprotein</keyword>
<keyword id="KW-0689">Ribosomal protein</keyword>
<keyword id="KW-0694">RNA-binding</keyword>
<keyword id="KW-0699">rRNA-binding</keyword>
<geneLocation type="chloroplast"/>
<feature type="initiator methionine" description="Removed" evidence="1">
    <location>
        <position position="1"/>
    </location>
</feature>
<feature type="chain" id="PRO_0000126596" description="Small ribosomal subunit protein uS8c">
    <location>
        <begin position="2"/>
        <end position="134"/>
    </location>
</feature>
<proteinExistence type="evidence at protein level"/>
<accession>P09597</accession>
<accession>Q9M3J9</accession>
<accession>Q9TI19</accession>
<protein>
    <recommendedName>
        <fullName evidence="4">Small ribosomal subunit protein uS8c</fullName>
    </recommendedName>
    <alternativeName>
        <fullName evidence="3">30S ribosomal protein S8, chloroplastic</fullName>
    </alternativeName>
</protein>
<reference key="1">
    <citation type="journal article" date="2000" name="J. Biol. Chem.">
        <title>The plastid ribosomal proteins. Identification of all the proteins in the 30S subunit of an organelle ribosome (chloroplast).</title>
        <authorList>
            <person name="Yamaguchi K."/>
            <person name="von Knoblauch K."/>
            <person name="Subramanian A.R."/>
        </authorList>
    </citation>
    <scope>NUCLEOTIDE SEQUENCE [GENOMIC DNA]</scope>
    <scope>PROTEIN SEQUENCE OF 2-11</scope>
    <scope>SUBUNIT</scope>
    <scope>SUBCELLULAR LOCATION</scope>
    <scope>MASS SPECTROMETRY</scope>
    <source>
        <strain>cv. Alwaro</strain>
        <tissue>Leaf</tissue>
    </source>
</reference>
<reference key="2">
    <citation type="journal article" date="2001" name="Plant Mol. Biol.">
        <title>The plastid chromosome of spinach (Spinacia oleracea): complete nucleotide sequence and gene organization.</title>
        <authorList>
            <person name="Schmitz-Linneweber C."/>
            <person name="Maier R.M."/>
            <person name="Alcaraz J.-P."/>
            <person name="Cottet A."/>
            <person name="Herrmann R.G."/>
            <person name="Mache R."/>
        </authorList>
    </citation>
    <scope>NUCLEOTIDE SEQUENCE [LARGE SCALE GENOMIC DNA]</scope>
    <source>
        <strain>cv. Geant d'hiver</strain>
        <strain>cv. Monatol</strain>
    </source>
</reference>
<reference key="3">
    <citation type="journal article" date="1989" name="Mol. Gen. Genet.">
        <title>Cotranscription of the S10- and spc-like operons in spinach chloroplasts and identification of three of their gene products.</title>
        <authorList>
            <person name="Zhou D.X."/>
            <person name="Quigley F."/>
            <person name="Massenet O."/>
            <person name="Mache R."/>
        </authorList>
    </citation>
    <scope>NUCLEOTIDE SEQUENCE [GENOMIC DNA] OF 1-84</scope>
    <source>
        <tissue>Leaf</tissue>
    </source>
</reference>
<reference key="4">
    <citation type="journal article" date="2007" name="Proc. Natl. Acad. Sci. U.S.A.">
        <title>Cryo-EM study of the spinach chloroplast ribosome reveals the structural and functional roles of plastid-specific ribosomal proteins.</title>
        <authorList>
            <person name="Sharma M.R."/>
            <person name="Wilson D.N."/>
            <person name="Datta P.P."/>
            <person name="Barat C."/>
            <person name="Schluenzen F."/>
            <person name="Fucini P."/>
            <person name="Agrawal R.K."/>
        </authorList>
    </citation>
    <scope>STRUCTURE BY ELECTRON MICROSCOPY (9.4 ANGSTROMS)</scope>
</reference>
<reference key="5">
    <citation type="journal article" date="2017" name="EMBO J.">
        <title>The complete structure of the chloroplast 70S ribosome in complex with translation factor pY.</title>
        <authorList>
            <person name="Bieri P."/>
            <person name="Leibundgut M."/>
            <person name="Saurer M."/>
            <person name="Boehringer D."/>
            <person name="Ban N."/>
        </authorList>
    </citation>
    <scope>STRUCTURE BY ELECTRON MICROSCOPY (3.40 ANGSTROMS)</scope>
    <scope>SUBUNIT</scope>
    <scope>SUBCELLULAR LOCATION</scope>
</reference>
<sequence length="134" mass="15499">MGKDTIADIITCIRNADMNRKGTVRIVSTNITENIVKILLREGFIENARKHQERNKYFLVLTLRHRRNKKGPYLNTFHLKRVSRPGLRIYSNYQRIPRILGGMGIAILSTSRGIMTDREARLEGIGGEILCYIW</sequence>
<name>RR8_SPIOL</name>